<accession>Q55CV5</accession>
<accession>O76168</accession>
<comment type="subcellular location">
    <subcellularLocation>
        <location evidence="2">Membrane</location>
        <topology evidence="2">Multi-pass membrane protein</topology>
    </subcellularLocation>
</comment>
<comment type="similarity">
    <text evidence="2">Belongs to the tetraspanin (TM4SF) family.</text>
</comment>
<evidence type="ECO:0000255" key="1"/>
<evidence type="ECO:0000305" key="2"/>
<reference key="1">
    <citation type="journal article" date="2005" name="Nature">
        <title>The genome of the social amoeba Dictyostelium discoideum.</title>
        <authorList>
            <person name="Eichinger L."/>
            <person name="Pachebat J.A."/>
            <person name="Gloeckner G."/>
            <person name="Rajandream M.A."/>
            <person name="Sucgang R."/>
            <person name="Berriman M."/>
            <person name="Song J."/>
            <person name="Olsen R."/>
            <person name="Szafranski K."/>
            <person name="Xu Q."/>
            <person name="Tunggal B."/>
            <person name="Kummerfeld S."/>
            <person name="Madera M."/>
            <person name="Konfortov B.A."/>
            <person name="Rivero F."/>
            <person name="Bankier A.T."/>
            <person name="Lehmann R."/>
            <person name="Hamlin N."/>
            <person name="Davies R."/>
            <person name="Gaudet P."/>
            <person name="Fey P."/>
            <person name="Pilcher K."/>
            <person name="Chen G."/>
            <person name="Saunders D."/>
            <person name="Sodergren E.J."/>
            <person name="Davis P."/>
            <person name="Kerhornou A."/>
            <person name="Nie X."/>
            <person name="Hall N."/>
            <person name="Anjard C."/>
            <person name="Hemphill L."/>
            <person name="Bason N."/>
            <person name="Farbrother P."/>
            <person name="Desany B."/>
            <person name="Just E."/>
            <person name="Morio T."/>
            <person name="Rost R."/>
            <person name="Churcher C.M."/>
            <person name="Cooper J."/>
            <person name="Haydock S."/>
            <person name="van Driessche N."/>
            <person name="Cronin A."/>
            <person name="Goodhead I."/>
            <person name="Muzny D.M."/>
            <person name="Mourier T."/>
            <person name="Pain A."/>
            <person name="Lu M."/>
            <person name="Harper D."/>
            <person name="Lindsay R."/>
            <person name="Hauser H."/>
            <person name="James K.D."/>
            <person name="Quiles M."/>
            <person name="Madan Babu M."/>
            <person name="Saito T."/>
            <person name="Buchrieser C."/>
            <person name="Wardroper A."/>
            <person name="Felder M."/>
            <person name="Thangavelu M."/>
            <person name="Johnson D."/>
            <person name="Knights A."/>
            <person name="Loulseged H."/>
            <person name="Mungall K.L."/>
            <person name="Oliver K."/>
            <person name="Price C."/>
            <person name="Quail M.A."/>
            <person name="Urushihara H."/>
            <person name="Hernandez J."/>
            <person name="Rabbinowitsch E."/>
            <person name="Steffen D."/>
            <person name="Sanders M."/>
            <person name="Ma J."/>
            <person name="Kohara Y."/>
            <person name="Sharp S."/>
            <person name="Simmonds M.N."/>
            <person name="Spiegler S."/>
            <person name="Tivey A."/>
            <person name="Sugano S."/>
            <person name="White B."/>
            <person name="Walker D."/>
            <person name="Woodward J.R."/>
            <person name="Winckler T."/>
            <person name="Tanaka Y."/>
            <person name="Shaulsky G."/>
            <person name="Schleicher M."/>
            <person name="Weinstock G.M."/>
            <person name="Rosenthal A."/>
            <person name="Cox E.C."/>
            <person name="Chisholm R.L."/>
            <person name="Gibbs R.A."/>
            <person name="Loomis W.F."/>
            <person name="Platzer M."/>
            <person name="Kay R.R."/>
            <person name="Williams J.G."/>
            <person name="Dear P.H."/>
            <person name="Noegel A.A."/>
            <person name="Barrell B.G."/>
            <person name="Kuspa A."/>
        </authorList>
    </citation>
    <scope>NUCLEOTIDE SEQUENCE [LARGE SCALE GENOMIC DNA]</scope>
    <source>
        <strain>AX4</strain>
    </source>
</reference>
<reference key="2">
    <citation type="submission" date="1998-06" db="EMBL/GenBank/DDBJ databases">
        <title>Function of CD9 homolog in Dictyostelium.</title>
        <authorList>
            <person name="Maeda M."/>
            <person name="Morio T."/>
            <person name="Tanaka Y."/>
            <person name="Urusihara H."/>
            <person name="Ochiai H."/>
            <person name="Saito T."/>
        </authorList>
    </citation>
    <scope>NUCLEOTIDE SEQUENCE [MRNA] OF 104-235</scope>
    <source>
        <strain>AX3-1</strain>
    </source>
</reference>
<keyword id="KW-0325">Glycoprotein</keyword>
<keyword id="KW-0472">Membrane</keyword>
<keyword id="KW-1185">Reference proteome</keyword>
<keyword id="KW-0812">Transmembrane</keyword>
<keyword id="KW-1133">Transmembrane helix</keyword>
<sequence length="235" mass="25499">MVDTSNLLPQTPRLLKVPLIILNIILWILGLVLVIVGGICVSFLSNFKDFTKASDAKSALSNLTTSIPAGVLVIGILFVIFTVVGCFVAYKEKLVGLVIYCAVMLILLVILIGVGGKAITLHNDDIINEVGGAWEHVANGTKNSTLTRLENFLKCCKWSNVSIDSSDLCPKDGDKIKYEGHYCGEALSDQFSSKIYAVGAAGLAIGIIELVAILFSLFLIIRICRSPRTRSYDQY</sequence>
<proteinExistence type="evidence at transcript level"/>
<protein>
    <recommendedName>
        <fullName>Probable tetraspanin tspA</fullName>
    </recommendedName>
</protein>
<name>TSPA_DICDI</name>
<gene>
    <name type="primary">tspA</name>
    <name type="synonym">cdp9</name>
    <name type="ORF">DDB_G0269110</name>
</gene>
<organism>
    <name type="scientific">Dictyostelium discoideum</name>
    <name type="common">Social amoeba</name>
    <dbReference type="NCBI Taxonomy" id="44689"/>
    <lineage>
        <taxon>Eukaryota</taxon>
        <taxon>Amoebozoa</taxon>
        <taxon>Evosea</taxon>
        <taxon>Eumycetozoa</taxon>
        <taxon>Dictyostelia</taxon>
        <taxon>Dictyosteliales</taxon>
        <taxon>Dictyosteliaceae</taxon>
        <taxon>Dictyostelium</taxon>
    </lineage>
</organism>
<dbReference type="EMBL" id="AAFI02000005">
    <property type="protein sequence ID" value="EAL71904.1"/>
    <property type="molecule type" value="Genomic_DNA"/>
</dbReference>
<dbReference type="EMBL" id="AB015186">
    <property type="protein sequence ID" value="BAA32211.1"/>
    <property type="molecule type" value="mRNA"/>
</dbReference>
<dbReference type="RefSeq" id="XP_646376.1">
    <property type="nucleotide sequence ID" value="XM_641284.1"/>
</dbReference>
<dbReference type="SMR" id="Q55CV5"/>
<dbReference type="FunCoup" id="Q55CV5">
    <property type="interactions" value="1"/>
</dbReference>
<dbReference type="STRING" id="44689.Q55CV5"/>
<dbReference type="GlyCosmos" id="Q55CV5">
    <property type="glycosylation" value="4 sites, No reported glycans"/>
</dbReference>
<dbReference type="GlyGen" id="Q55CV5">
    <property type="glycosylation" value="4 sites"/>
</dbReference>
<dbReference type="PaxDb" id="44689-DDB0191510"/>
<dbReference type="EnsemblProtists" id="EAL71904">
    <property type="protein sequence ID" value="EAL71904"/>
    <property type="gene ID" value="DDB_G0269110"/>
</dbReference>
<dbReference type="GeneID" id="8617331"/>
<dbReference type="KEGG" id="ddi:DDB_G0269110"/>
<dbReference type="dictyBase" id="DDB_G0269110">
    <property type="gene designation" value="tspA"/>
</dbReference>
<dbReference type="VEuPathDB" id="AmoebaDB:DDB_G0269110"/>
<dbReference type="HOGENOM" id="CLU_1182012_0_0_1"/>
<dbReference type="InParanoid" id="Q55CV5"/>
<dbReference type="OMA" id="SCYLAKQ"/>
<dbReference type="PhylomeDB" id="Q55CV5"/>
<dbReference type="PRO" id="PR:Q55CV5"/>
<dbReference type="Proteomes" id="UP000002195">
    <property type="component" value="Chromosome 1"/>
</dbReference>
<dbReference type="GO" id="GO:0016020">
    <property type="term" value="C:membrane"/>
    <property type="evidence" value="ECO:0007669"/>
    <property type="project" value="UniProtKB-SubCell"/>
</dbReference>
<dbReference type="InterPro" id="IPR018499">
    <property type="entry name" value="Tetraspanin/Peripherin"/>
</dbReference>
<dbReference type="PANTHER" id="PTHR19282">
    <property type="entry name" value="TETRASPANIN"/>
    <property type="match status" value="1"/>
</dbReference>
<dbReference type="PANTHER" id="PTHR19282:SF417">
    <property type="entry name" value="TETRASPANIN TSPA-RELATED"/>
    <property type="match status" value="1"/>
</dbReference>
<dbReference type="Pfam" id="PF00335">
    <property type="entry name" value="Tetraspanin"/>
    <property type="match status" value="1"/>
</dbReference>
<dbReference type="PRINTS" id="PR00259">
    <property type="entry name" value="TMFOUR"/>
</dbReference>
<feature type="chain" id="PRO_0000315596" description="Probable tetraspanin tspA">
    <location>
        <begin position="1"/>
        <end position="235"/>
    </location>
</feature>
<feature type="topological domain" description="Cytoplasmic" evidence="1">
    <location>
        <begin position="1"/>
        <end position="18"/>
    </location>
</feature>
<feature type="transmembrane region" description="Helical" evidence="1">
    <location>
        <begin position="19"/>
        <end position="39"/>
    </location>
</feature>
<feature type="topological domain" description="Extracellular" evidence="1">
    <location>
        <begin position="40"/>
        <end position="68"/>
    </location>
</feature>
<feature type="transmembrane region" description="Helical" evidence="1">
    <location>
        <begin position="69"/>
        <end position="89"/>
    </location>
</feature>
<feature type="topological domain" description="Cytoplasmic" evidence="1">
    <location>
        <begin position="90"/>
        <end position="93"/>
    </location>
</feature>
<feature type="transmembrane region" description="Helical" evidence="1">
    <location>
        <begin position="94"/>
        <end position="114"/>
    </location>
</feature>
<feature type="topological domain" description="Extracellular" evidence="1">
    <location>
        <begin position="115"/>
        <end position="200"/>
    </location>
</feature>
<feature type="transmembrane region" description="Helical" evidence="1">
    <location>
        <begin position="201"/>
        <end position="221"/>
    </location>
</feature>
<feature type="topological domain" description="Cytoplasmic" evidence="1">
    <location>
        <begin position="222"/>
        <end position="235"/>
    </location>
</feature>
<feature type="glycosylation site" description="N-linked (GlcNAc...) asparagine" evidence="1">
    <location>
        <position position="62"/>
    </location>
</feature>
<feature type="glycosylation site" description="N-linked (GlcNAc...) asparagine" evidence="1">
    <location>
        <position position="139"/>
    </location>
</feature>
<feature type="glycosylation site" description="N-linked (GlcNAc...) asparagine" evidence="1">
    <location>
        <position position="143"/>
    </location>
</feature>
<feature type="glycosylation site" description="N-linked (GlcNAc...) asparagine" evidence="1">
    <location>
        <position position="160"/>
    </location>
</feature>